<organism>
    <name type="scientific">Streptococcus pneumoniae (strain Taiwan19F-14)</name>
    <dbReference type="NCBI Taxonomy" id="487213"/>
    <lineage>
        <taxon>Bacteria</taxon>
        <taxon>Bacillati</taxon>
        <taxon>Bacillota</taxon>
        <taxon>Bacilli</taxon>
        <taxon>Lactobacillales</taxon>
        <taxon>Streptococcaceae</taxon>
        <taxon>Streptococcus</taxon>
    </lineage>
</organism>
<feature type="chain" id="PRO_1000190047" description="Methionyl-tRNA formyltransferase">
    <location>
        <begin position="1"/>
        <end position="311"/>
    </location>
</feature>
<feature type="binding site" evidence="1">
    <location>
        <begin position="110"/>
        <end position="113"/>
    </location>
    <ligand>
        <name>(6S)-5,6,7,8-tetrahydrofolate</name>
        <dbReference type="ChEBI" id="CHEBI:57453"/>
    </ligand>
</feature>
<keyword id="KW-0648">Protein biosynthesis</keyword>
<keyword id="KW-0808">Transferase</keyword>
<dbReference type="EC" id="2.1.2.9" evidence="1"/>
<dbReference type="EMBL" id="CP000921">
    <property type="protein sequence ID" value="ACO24258.1"/>
    <property type="molecule type" value="Genomic_DNA"/>
</dbReference>
<dbReference type="RefSeq" id="WP_000163693.1">
    <property type="nucleotide sequence ID" value="NC_012469.1"/>
</dbReference>
<dbReference type="SMR" id="C1CSZ4"/>
<dbReference type="KEGG" id="snt:SPT_1673"/>
<dbReference type="HOGENOM" id="CLU_033347_1_1_9"/>
<dbReference type="GO" id="GO:0005829">
    <property type="term" value="C:cytosol"/>
    <property type="evidence" value="ECO:0007669"/>
    <property type="project" value="TreeGrafter"/>
</dbReference>
<dbReference type="GO" id="GO:0004479">
    <property type="term" value="F:methionyl-tRNA formyltransferase activity"/>
    <property type="evidence" value="ECO:0007669"/>
    <property type="project" value="UniProtKB-UniRule"/>
</dbReference>
<dbReference type="CDD" id="cd08646">
    <property type="entry name" value="FMT_core_Met-tRNA-FMT_N"/>
    <property type="match status" value="1"/>
</dbReference>
<dbReference type="CDD" id="cd08704">
    <property type="entry name" value="Met_tRNA_FMT_C"/>
    <property type="match status" value="1"/>
</dbReference>
<dbReference type="FunFam" id="3.10.25.10:FF:000004">
    <property type="entry name" value="Methionyl-tRNA formyltransferase"/>
    <property type="match status" value="1"/>
</dbReference>
<dbReference type="FunFam" id="3.40.50.170:FF:000004">
    <property type="entry name" value="Methionyl-tRNA formyltransferase"/>
    <property type="match status" value="1"/>
</dbReference>
<dbReference type="Gene3D" id="3.10.25.10">
    <property type="entry name" value="Formyl transferase, C-terminal domain"/>
    <property type="match status" value="1"/>
</dbReference>
<dbReference type="Gene3D" id="3.40.50.170">
    <property type="entry name" value="Formyl transferase, N-terminal domain"/>
    <property type="match status" value="1"/>
</dbReference>
<dbReference type="HAMAP" id="MF_00182">
    <property type="entry name" value="Formyl_trans"/>
    <property type="match status" value="1"/>
</dbReference>
<dbReference type="InterPro" id="IPR005794">
    <property type="entry name" value="Fmt"/>
</dbReference>
<dbReference type="InterPro" id="IPR005793">
    <property type="entry name" value="Formyl_trans_C"/>
</dbReference>
<dbReference type="InterPro" id="IPR037022">
    <property type="entry name" value="Formyl_trans_C_sf"/>
</dbReference>
<dbReference type="InterPro" id="IPR002376">
    <property type="entry name" value="Formyl_transf_N"/>
</dbReference>
<dbReference type="InterPro" id="IPR036477">
    <property type="entry name" value="Formyl_transf_N_sf"/>
</dbReference>
<dbReference type="InterPro" id="IPR011034">
    <property type="entry name" value="Formyl_transferase-like_C_sf"/>
</dbReference>
<dbReference type="InterPro" id="IPR001555">
    <property type="entry name" value="GART_AS"/>
</dbReference>
<dbReference type="InterPro" id="IPR044135">
    <property type="entry name" value="Met-tRNA-FMT_C"/>
</dbReference>
<dbReference type="InterPro" id="IPR041711">
    <property type="entry name" value="Met-tRNA-FMT_N"/>
</dbReference>
<dbReference type="NCBIfam" id="TIGR00460">
    <property type="entry name" value="fmt"/>
    <property type="match status" value="1"/>
</dbReference>
<dbReference type="PANTHER" id="PTHR11138">
    <property type="entry name" value="METHIONYL-TRNA FORMYLTRANSFERASE"/>
    <property type="match status" value="1"/>
</dbReference>
<dbReference type="PANTHER" id="PTHR11138:SF5">
    <property type="entry name" value="METHIONYL-TRNA FORMYLTRANSFERASE, MITOCHONDRIAL"/>
    <property type="match status" value="1"/>
</dbReference>
<dbReference type="Pfam" id="PF02911">
    <property type="entry name" value="Formyl_trans_C"/>
    <property type="match status" value="1"/>
</dbReference>
<dbReference type="Pfam" id="PF00551">
    <property type="entry name" value="Formyl_trans_N"/>
    <property type="match status" value="1"/>
</dbReference>
<dbReference type="SUPFAM" id="SSF50486">
    <property type="entry name" value="FMT C-terminal domain-like"/>
    <property type="match status" value="1"/>
</dbReference>
<dbReference type="SUPFAM" id="SSF53328">
    <property type="entry name" value="Formyltransferase"/>
    <property type="match status" value="1"/>
</dbReference>
<dbReference type="PROSITE" id="PS00373">
    <property type="entry name" value="GART"/>
    <property type="match status" value="1"/>
</dbReference>
<accession>C1CSZ4</accession>
<evidence type="ECO:0000255" key="1">
    <source>
        <dbReference type="HAMAP-Rule" id="MF_00182"/>
    </source>
</evidence>
<name>FMT_STRZT</name>
<protein>
    <recommendedName>
        <fullName evidence="1">Methionyl-tRNA formyltransferase</fullName>
        <ecNumber evidence="1">2.1.2.9</ecNumber>
    </recommendedName>
</protein>
<sequence>MTKLIFMGTPDFSATVLKGLLTDDRYEILAVVTQPDRAVGRKKVIQETPVKQAAKEAGLSIYQPEKLSGSPEMEDLMKLGADGIVTAAFGQFLPSKLLDSMDFAVNVHASLLPRHRGGAPIHYALIQGDEEAGVTIMEMVKEMDAGDMISRRSIPITDEDNVGTLFEKLALVGRDLLLDTLPAYIAGDIKPEPQDTSQVTFSPNIKPEEEKLDWNKTNRQLFNQIRGMNPWPVAHTFLKGDRFKIYEALPVEGQGNPGEILSIGKKELIVATAEGALSLKQVQPAGKPKMDIASFLNGVGRTLTVGERFGD</sequence>
<gene>
    <name evidence="1" type="primary">fmt</name>
    <name type="ordered locus">SPT_1673</name>
</gene>
<reference key="1">
    <citation type="journal article" date="2010" name="Genome Biol.">
        <title>Structure and dynamics of the pan-genome of Streptococcus pneumoniae and closely related species.</title>
        <authorList>
            <person name="Donati C."/>
            <person name="Hiller N.L."/>
            <person name="Tettelin H."/>
            <person name="Muzzi A."/>
            <person name="Croucher N.J."/>
            <person name="Angiuoli S.V."/>
            <person name="Oggioni M."/>
            <person name="Dunning Hotopp J.C."/>
            <person name="Hu F.Z."/>
            <person name="Riley D.R."/>
            <person name="Covacci A."/>
            <person name="Mitchell T.J."/>
            <person name="Bentley S.D."/>
            <person name="Kilian M."/>
            <person name="Ehrlich G.D."/>
            <person name="Rappuoli R."/>
            <person name="Moxon E.R."/>
            <person name="Masignani V."/>
        </authorList>
    </citation>
    <scope>NUCLEOTIDE SEQUENCE [LARGE SCALE GENOMIC DNA]</scope>
    <source>
        <strain>Taiwan19F-14</strain>
    </source>
</reference>
<comment type="function">
    <text evidence="1">Attaches a formyl group to the free amino group of methionyl-tRNA(fMet). The formyl group appears to play a dual role in the initiator identity of N-formylmethionyl-tRNA by promoting its recognition by IF2 and preventing the misappropriation of this tRNA by the elongation apparatus.</text>
</comment>
<comment type="catalytic activity">
    <reaction evidence="1">
        <text>L-methionyl-tRNA(fMet) + (6R)-10-formyltetrahydrofolate = N-formyl-L-methionyl-tRNA(fMet) + (6S)-5,6,7,8-tetrahydrofolate + H(+)</text>
        <dbReference type="Rhea" id="RHEA:24380"/>
        <dbReference type="Rhea" id="RHEA-COMP:9952"/>
        <dbReference type="Rhea" id="RHEA-COMP:9953"/>
        <dbReference type="ChEBI" id="CHEBI:15378"/>
        <dbReference type="ChEBI" id="CHEBI:57453"/>
        <dbReference type="ChEBI" id="CHEBI:78530"/>
        <dbReference type="ChEBI" id="CHEBI:78844"/>
        <dbReference type="ChEBI" id="CHEBI:195366"/>
        <dbReference type="EC" id="2.1.2.9"/>
    </reaction>
</comment>
<comment type="similarity">
    <text evidence="1">Belongs to the Fmt family.</text>
</comment>
<proteinExistence type="inferred from homology"/>